<accession>P0A3Z5</accession>
<accession>G0K7M9</accession>
<accession>Q44597</accession>
<keyword id="KW-0378">Hydrolase</keyword>
<keyword id="KW-0574">Periplasm</keyword>
<keyword id="KW-0645">Protease</keyword>
<keyword id="KW-0677">Repeat</keyword>
<keyword id="KW-0720">Serine protease</keyword>
<keyword id="KW-0732">Signal</keyword>
<keyword id="KW-0346">Stress response</keyword>
<gene>
    <name type="primary">htrA</name>
    <name type="ordered locus">BR0611</name>
    <name type="ordered locus">BS1330_I0607</name>
</gene>
<dbReference type="EC" id="3.4.21.107"/>
<dbReference type="EMBL" id="AE014291">
    <property type="protein sequence ID" value="AAN29540.1"/>
    <property type="molecule type" value="Genomic_DNA"/>
</dbReference>
<dbReference type="EMBL" id="CP002997">
    <property type="protein sequence ID" value="AEM17957.1"/>
    <property type="molecule type" value="Genomic_DNA"/>
</dbReference>
<dbReference type="RefSeq" id="WP_002963760.1">
    <property type="nucleotide sequence ID" value="NZ_KN046804.1"/>
</dbReference>
<dbReference type="SMR" id="P0A3Z5"/>
<dbReference type="KEGG" id="bms:BR0611"/>
<dbReference type="KEGG" id="bsi:BS1330_I0607"/>
<dbReference type="PATRIC" id="fig|204722.22.peg.1292"/>
<dbReference type="HOGENOM" id="CLU_020120_1_0_5"/>
<dbReference type="PhylomeDB" id="P0A3Z5"/>
<dbReference type="PRO" id="PR:P0A3Z5"/>
<dbReference type="Proteomes" id="UP000007104">
    <property type="component" value="Chromosome I"/>
</dbReference>
<dbReference type="GO" id="GO:0030288">
    <property type="term" value="C:outer membrane-bounded periplasmic space"/>
    <property type="evidence" value="ECO:0000250"/>
    <property type="project" value="UniProtKB"/>
</dbReference>
<dbReference type="GO" id="GO:0004252">
    <property type="term" value="F:serine-type endopeptidase activity"/>
    <property type="evidence" value="ECO:0000250"/>
    <property type="project" value="UniProtKB"/>
</dbReference>
<dbReference type="GO" id="GO:0006508">
    <property type="term" value="P:proteolysis"/>
    <property type="evidence" value="ECO:0007669"/>
    <property type="project" value="UniProtKB-KW"/>
</dbReference>
<dbReference type="CDD" id="cd10839">
    <property type="entry name" value="cpPDZ1_DegP-like"/>
    <property type="match status" value="1"/>
</dbReference>
<dbReference type="CDD" id="cd23084">
    <property type="entry name" value="cpPDZ2_DegP-like"/>
    <property type="match status" value="1"/>
</dbReference>
<dbReference type="FunFam" id="2.30.42.10:FF:000037">
    <property type="entry name" value="Periplasmic serine endoprotease DegP-like"/>
    <property type="match status" value="1"/>
</dbReference>
<dbReference type="FunFam" id="2.30.42.10:FF:000197">
    <property type="entry name" value="Periplasmic serine endoprotease DegP-like"/>
    <property type="match status" value="1"/>
</dbReference>
<dbReference type="FunFam" id="2.40.10.120:FF:000007">
    <property type="entry name" value="Periplasmic serine endoprotease DegP-like"/>
    <property type="match status" value="1"/>
</dbReference>
<dbReference type="Gene3D" id="2.30.42.10">
    <property type="match status" value="2"/>
</dbReference>
<dbReference type="Gene3D" id="2.40.10.120">
    <property type="match status" value="1"/>
</dbReference>
<dbReference type="InterPro" id="IPR001478">
    <property type="entry name" value="PDZ"/>
</dbReference>
<dbReference type="InterPro" id="IPR036034">
    <property type="entry name" value="PDZ_sf"/>
</dbReference>
<dbReference type="InterPro" id="IPR011782">
    <property type="entry name" value="Pept_S1C_Do"/>
</dbReference>
<dbReference type="InterPro" id="IPR009003">
    <property type="entry name" value="Peptidase_S1_PA"/>
</dbReference>
<dbReference type="InterPro" id="IPR001940">
    <property type="entry name" value="Peptidase_S1C"/>
</dbReference>
<dbReference type="NCBIfam" id="TIGR02037">
    <property type="entry name" value="degP_htrA_DO"/>
    <property type="match status" value="1"/>
</dbReference>
<dbReference type="PANTHER" id="PTHR22939">
    <property type="entry name" value="SERINE PROTEASE FAMILY S1C HTRA-RELATED"/>
    <property type="match status" value="1"/>
</dbReference>
<dbReference type="PANTHER" id="PTHR22939:SF129">
    <property type="entry name" value="SERINE PROTEASE HTRA2, MITOCHONDRIAL"/>
    <property type="match status" value="1"/>
</dbReference>
<dbReference type="Pfam" id="PF00595">
    <property type="entry name" value="PDZ"/>
    <property type="match status" value="1"/>
</dbReference>
<dbReference type="Pfam" id="PF13180">
    <property type="entry name" value="PDZ_2"/>
    <property type="match status" value="1"/>
</dbReference>
<dbReference type="Pfam" id="PF13365">
    <property type="entry name" value="Trypsin_2"/>
    <property type="match status" value="1"/>
</dbReference>
<dbReference type="PRINTS" id="PR00834">
    <property type="entry name" value="PROTEASES2C"/>
</dbReference>
<dbReference type="SMART" id="SM00228">
    <property type="entry name" value="PDZ"/>
    <property type="match status" value="2"/>
</dbReference>
<dbReference type="SUPFAM" id="SSF50156">
    <property type="entry name" value="PDZ domain-like"/>
    <property type="match status" value="2"/>
</dbReference>
<dbReference type="SUPFAM" id="SSF50494">
    <property type="entry name" value="Trypsin-like serine proteases"/>
    <property type="match status" value="1"/>
</dbReference>
<dbReference type="PROSITE" id="PS50106">
    <property type="entry name" value="PDZ"/>
    <property type="match status" value="2"/>
</dbReference>
<proteinExistence type="inferred from homology"/>
<evidence type="ECO:0000250" key="1"/>
<evidence type="ECO:0000255" key="2"/>
<evidence type="ECO:0000255" key="3">
    <source>
        <dbReference type="PROSITE-ProRule" id="PRU00143"/>
    </source>
</evidence>
<evidence type="ECO:0000256" key="4">
    <source>
        <dbReference type="SAM" id="MobiDB-lite"/>
    </source>
</evidence>
<evidence type="ECO:0000305" key="5"/>
<name>DEGPL_BRUSU</name>
<feature type="signal peptide" evidence="2">
    <location>
        <begin position="1"/>
        <end position="25"/>
    </location>
</feature>
<feature type="chain" id="PRO_0000026926" description="Probable periplasmic serine endoprotease DegP-like">
    <location>
        <begin position="26"/>
        <end position="513"/>
    </location>
</feature>
<feature type="domain" description="PDZ 1" evidence="3">
    <location>
        <begin position="300"/>
        <end position="391"/>
    </location>
</feature>
<feature type="domain" description="PDZ 2" evidence="3">
    <location>
        <begin position="414"/>
        <end position="500"/>
    </location>
</feature>
<feature type="region of interest" description="Disordered" evidence="4">
    <location>
        <begin position="100"/>
        <end position="135"/>
    </location>
</feature>
<feature type="region of interest" description="Serine protease">
    <location>
        <begin position="125"/>
        <end position="299"/>
    </location>
</feature>
<feature type="region of interest" description="Disordered" evidence="4">
    <location>
        <begin position="403"/>
        <end position="428"/>
    </location>
</feature>
<feature type="compositionally biased region" description="Basic and acidic residues" evidence="4">
    <location>
        <begin position="101"/>
        <end position="119"/>
    </location>
</feature>
<feature type="active site" description="Charge relay system" evidence="2">
    <location>
        <position position="152"/>
    </location>
</feature>
<feature type="active site" description="Charge relay system" evidence="2">
    <location>
        <position position="182"/>
    </location>
</feature>
<feature type="active site" description="Charge relay system" evidence="2">
    <location>
        <position position="257"/>
    </location>
</feature>
<feature type="binding site" evidence="1">
    <location>
        <begin position="255"/>
        <end position="257"/>
    </location>
    <ligand>
        <name>substrate</name>
    </ligand>
</feature>
<feature type="binding site" evidence="1">
    <location>
        <begin position="312"/>
        <end position="316"/>
    </location>
    <ligand>
        <name>substrate</name>
    </ligand>
</feature>
<comment type="function">
    <text evidence="1">Might be efficient in the degradation of transiently denatured and unfolded proteins which accumulate in the periplasm following stress conditions.</text>
</comment>
<comment type="catalytic activity">
    <reaction>
        <text>Acts on substrates that are at least partially unfolded. The cleavage site P1 residue is normally between a pair of hydrophobic residues, such as Val-|-Val.</text>
        <dbReference type="EC" id="3.4.21.107"/>
    </reaction>
</comment>
<comment type="subcellular location">
    <subcellularLocation>
        <location evidence="5">Periplasm</location>
    </subcellularLocation>
</comment>
<comment type="similarity">
    <text evidence="5">Belongs to the peptidase S1C family.</text>
</comment>
<sequence>MSRARISNYRKGVAAVALSAALAGAFVVTGPLGALNEARAEAVHVTPPPQAGFADLVEKVRPAVVSVRVKKDVQETSNRGPQFFGPPGFDQLPDGHPLKRFFRDFGMEPRGDSRSDNRRGKANKPRPGHERPVAQGSGFVISEDGYVVTNNHVVSDGDAYTVVLDDGTELDAKLIGADPRTDLAVLKINAPKRKFVYVAFGDDNKVRVGDWVVAVGNPFGLGGTVTSGIVSARGRDIGAGPYDDFIQIDAAVNKGNSGGPAFDLSGEVIGINTAIFSPSGGSVGIAFAIPSSTAKQVVDQLIKKGSVERGWIGVQIQPVTKDIAASLGLAEEKGAIVASPQDDGPAAKAGIKAGDVITAVNGETVQDPRDLARKVANIAPGEKAALTVWRKNKAEEINVTIAAMPNDKGKSGSQSNDNDGGQGETLDSYGLTVVPSEDGKGVVVTDVDPDSDAADRGIRSGDVIVSVNNQTVKTAGDINKAITAAEKSGRKAVLLQLQSNDQSRFVALPINQE</sequence>
<organism>
    <name type="scientific">Brucella suis biovar 1 (strain 1330)</name>
    <dbReference type="NCBI Taxonomy" id="204722"/>
    <lineage>
        <taxon>Bacteria</taxon>
        <taxon>Pseudomonadati</taxon>
        <taxon>Pseudomonadota</taxon>
        <taxon>Alphaproteobacteria</taxon>
        <taxon>Hyphomicrobiales</taxon>
        <taxon>Brucellaceae</taxon>
        <taxon>Brucella/Ochrobactrum group</taxon>
        <taxon>Brucella</taxon>
    </lineage>
</organism>
<reference key="1">
    <citation type="journal article" date="2002" name="Proc. Natl. Acad. Sci. U.S.A.">
        <title>The Brucella suis genome reveals fundamental similarities between animal and plant pathogens and symbionts.</title>
        <authorList>
            <person name="Paulsen I.T."/>
            <person name="Seshadri R."/>
            <person name="Nelson K.E."/>
            <person name="Eisen J.A."/>
            <person name="Heidelberg J.F."/>
            <person name="Read T.D."/>
            <person name="Dodson R.J."/>
            <person name="Umayam L.A."/>
            <person name="Brinkac L.M."/>
            <person name="Beanan M.J."/>
            <person name="Daugherty S.C."/>
            <person name="DeBoy R.T."/>
            <person name="Durkin A.S."/>
            <person name="Kolonay J.F."/>
            <person name="Madupu R."/>
            <person name="Nelson W.C."/>
            <person name="Ayodeji B."/>
            <person name="Kraul M."/>
            <person name="Shetty J."/>
            <person name="Malek J.A."/>
            <person name="Van Aken S.E."/>
            <person name="Riedmuller S."/>
            <person name="Tettelin H."/>
            <person name="Gill S.R."/>
            <person name="White O."/>
            <person name="Salzberg S.L."/>
            <person name="Hoover D.L."/>
            <person name="Lindler L.E."/>
            <person name="Halling S.M."/>
            <person name="Boyle S.M."/>
            <person name="Fraser C.M."/>
        </authorList>
    </citation>
    <scope>NUCLEOTIDE SEQUENCE [LARGE SCALE GENOMIC DNA]</scope>
    <source>
        <strain>1330</strain>
    </source>
</reference>
<reference key="2">
    <citation type="journal article" date="2011" name="J. Bacteriol.">
        <title>Revised genome sequence of Brucella suis 1330.</title>
        <authorList>
            <person name="Tae H."/>
            <person name="Shallom S."/>
            <person name="Settlage R."/>
            <person name="Preston D."/>
            <person name="Adams L.G."/>
            <person name="Garner H.R."/>
        </authorList>
    </citation>
    <scope>NUCLEOTIDE SEQUENCE [LARGE SCALE GENOMIC DNA]</scope>
    <source>
        <strain>1330</strain>
    </source>
</reference>
<protein>
    <recommendedName>
        <fullName>Probable periplasmic serine endoprotease DegP-like</fullName>
        <ecNumber>3.4.21.107</ecNumber>
    </recommendedName>
    <alternativeName>
        <fullName>Protease Do</fullName>
    </alternativeName>
</protein>